<protein>
    <recommendedName>
        <fullName>NADPH:adrenodoxin oxidoreductase, mitochondrial</fullName>
        <shortName>AR</shortName>
        <shortName>Adrenodoxin reductase</shortName>
        <ecNumber evidence="9">1.18.1.6</ecNumber>
    </recommendedName>
    <alternativeName>
        <fullName>Ferredoxin--NADP(+) reductase</fullName>
        <shortName>Ferredoxin reductase</shortName>
    </alternativeName>
</protein>
<proteinExistence type="evidence at protein level"/>
<name>ADRO_BOVIN</name>
<accession>P08165</accession>
<accession>Q58CY0</accession>
<accession>Q95KN8</accession>
<organism>
    <name type="scientific">Bos taurus</name>
    <name type="common">Bovine</name>
    <dbReference type="NCBI Taxonomy" id="9913"/>
    <lineage>
        <taxon>Eukaryota</taxon>
        <taxon>Metazoa</taxon>
        <taxon>Chordata</taxon>
        <taxon>Craniata</taxon>
        <taxon>Vertebrata</taxon>
        <taxon>Euteleostomi</taxon>
        <taxon>Mammalia</taxon>
        <taxon>Eutheria</taxon>
        <taxon>Laurasiatheria</taxon>
        <taxon>Artiodactyla</taxon>
        <taxon>Ruminantia</taxon>
        <taxon>Pecora</taxon>
        <taxon>Bovidae</taxon>
        <taxon>Bovinae</taxon>
        <taxon>Bos</taxon>
    </lineage>
</organism>
<gene>
    <name type="primary">FDXR</name>
    <name type="synonym">ADXR</name>
</gene>
<comment type="function">
    <text evidence="1 9">Serves as the first electron transfer protein in all the mitochondrial P450 systems including cholesterol side chain cleavage in all steroidogenic tissues, steroid 11-beta hydroxylation in the adrenal cortex, 25-OH-vitamin D3-24 hydroxylation in the kidney, and sterol C-27 hydroxylation in the liver (PubMed:7811729). Also acts as a ferredoxin--NADP(+) reductase essential for coenzyme Q biosynthesis: together with FDX2, transfers the electrons required for the hydroxylation reaction performed by COQ6 (By similarity).</text>
</comment>
<comment type="catalytic activity">
    <reaction evidence="9">
        <text>2 reduced [adrenodoxin] + NADP(+) + H(+) = 2 oxidized [adrenodoxin] + NADPH</text>
        <dbReference type="Rhea" id="RHEA:42312"/>
        <dbReference type="Rhea" id="RHEA-COMP:9998"/>
        <dbReference type="Rhea" id="RHEA-COMP:9999"/>
        <dbReference type="ChEBI" id="CHEBI:15378"/>
        <dbReference type="ChEBI" id="CHEBI:33737"/>
        <dbReference type="ChEBI" id="CHEBI:33738"/>
        <dbReference type="ChEBI" id="CHEBI:57783"/>
        <dbReference type="ChEBI" id="CHEBI:58349"/>
        <dbReference type="EC" id="1.18.1.6"/>
    </reaction>
</comment>
<comment type="catalytic activity">
    <reaction evidence="1">
        <text>2 reduced [2Fe-2S]-[ferredoxin] + NADP(+) + H(+) = 2 oxidized [2Fe-2S]-[ferredoxin] + NADPH</text>
        <dbReference type="Rhea" id="RHEA:20125"/>
        <dbReference type="Rhea" id="RHEA-COMP:10000"/>
        <dbReference type="Rhea" id="RHEA-COMP:10001"/>
        <dbReference type="ChEBI" id="CHEBI:15378"/>
        <dbReference type="ChEBI" id="CHEBI:33737"/>
        <dbReference type="ChEBI" id="CHEBI:33738"/>
        <dbReference type="ChEBI" id="CHEBI:57783"/>
        <dbReference type="ChEBI" id="CHEBI:58349"/>
    </reaction>
</comment>
<comment type="cofactor">
    <cofactor evidence="3">
        <name>FAD</name>
        <dbReference type="ChEBI" id="CHEBI:57692"/>
    </cofactor>
</comment>
<comment type="pathway">
    <text evidence="9">Steroid metabolism; cholesterol metabolism.</text>
</comment>
<comment type="subunit">
    <text evidence="3 4 5">Monomer. Interacts directly with FDX1.</text>
</comment>
<comment type="interaction">
    <interactant intactId="EBI-593948">
        <id>P08165</id>
    </interactant>
    <interactant intactId="EBI-593992">
        <id>P00257</id>
        <label>FDX1</label>
    </interactant>
    <organismsDiffer>false</organismsDiffer>
    <experiments>2</experiments>
</comment>
<comment type="interaction">
    <interactant intactId="EBI-593948">
        <id>P08165</id>
    </interactant>
    <interactant intactId="EBI-593907">
        <id>P0A3E0</id>
        <label>isiB</label>
    </interactant>
    <organismsDiffer>true</organismsDiffer>
    <experiments>3</experiments>
</comment>
<comment type="subcellular location">
    <subcellularLocation>
        <location evidence="2">Mitochondrion inner membrane</location>
        <topology evidence="10">Peripheral membrane protein</topology>
    </subcellularLocation>
</comment>
<comment type="alternative products">
    <event type="alternative splicing"/>
    <isoform>
        <id>P08165-1</id>
        <name>Short</name>
        <sequence type="displayed"/>
    </isoform>
    <isoform>
        <id>P08165-2</id>
        <name>Long</name>
        <sequence type="described" ref="VSP_003415"/>
    </isoform>
</comment>
<comment type="tissue specificity">
    <text evidence="6">Detected in adrenal cortex and corpus luteum (at protein level).</text>
</comment>
<comment type="miscellaneous">
    <molecule>Isoform Long</molecule>
    <text evidence="10">Represents 10-20% of all adrenodoxin reductase mRNAs and seems to be inactive.</text>
</comment>
<comment type="similarity">
    <text evidence="10">Belongs to the ferredoxin--NADP reductase type 1 family.</text>
</comment>
<dbReference type="EC" id="1.18.1.6" evidence="9"/>
<dbReference type="EMBL" id="M17029">
    <property type="protein sequence ID" value="AAA30362.1"/>
    <property type="molecule type" value="mRNA"/>
</dbReference>
<dbReference type="EMBL" id="D00211">
    <property type="protein sequence ID" value="BAA00150.1"/>
    <property type="molecule type" value="mRNA"/>
</dbReference>
<dbReference type="EMBL" id="X13736">
    <property type="protein sequence ID" value="CAA32002.1"/>
    <property type="molecule type" value="mRNA"/>
</dbReference>
<dbReference type="EMBL" id="D83475">
    <property type="protein sequence ID" value="BAA11921.1"/>
    <property type="molecule type" value="Genomic_DNA"/>
</dbReference>
<dbReference type="EMBL" id="BT021817">
    <property type="protein sequence ID" value="AAX46664.1"/>
    <property type="molecule type" value="mRNA"/>
</dbReference>
<dbReference type="PIR" id="JT0751">
    <property type="entry name" value="JT0751"/>
</dbReference>
<dbReference type="RefSeq" id="NP_777116.1">
    <property type="nucleotide sequence ID" value="NM_174691.1"/>
</dbReference>
<dbReference type="PDB" id="1CJC">
    <property type="method" value="X-ray"/>
    <property type="resolution" value="1.70 A"/>
    <property type="chains" value="A=33-492"/>
</dbReference>
<dbReference type="PDB" id="1E1K">
    <property type="method" value="X-ray"/>
    <property type="resolution" value="1.95 A"/>
    <property type="chains" value="A=33-492"/>
</dbReference>
<dbReference type="PDB" id="1E1L">
    <property type="method" value="X-ray"/>
    <property type="resolution" value="2.30 A"/>
    <property type="chains" value="A=33-492"/>
</dbReference>
<dbReference type="PDB" id="1E1M">
    <property type="method" value="X-ray"/>
    <property type="resolution" value="1.85 A"/>
    <property type="chains" value="A=33-492"/>
</dbReference>
<dbReference type="PDB" id="1E1N">
    <property type="method" value="X-ray"/>
    <property type="resolution" value="2.40 A"/>
    <property type="chains" value="A=33-492"/>
</dbReference>
<dbReference type="PDB" id="1E6E">
    <property type="method" value="X-ray"/>
    <property type="resolution" value="2.30 A"/>
    <property type="chains" value="A/C=33-492"/>
</dbReference>
<dbReference type="PDBsum" id="1CJC"/>
<dbReference type="PDBsum" id="1E1K"/>
<dbReference type="PDBsum" id="1E1L"/>
<dbReference type="PDBsum" id="1E1M"/>
<dbReference type="PDBsum" id="1E1N"/>
<dbReference type="PDBsum" id="1E6E"/>
<dbReference type="SMR" id="P08165"/>
<dbReference type="CORUM" id="P08165"/>
<dbReference type="FunCoup" id="P08165">
    <property type="interactions" value="2194"/>
</dbReference>
<dbReference type="IntAct" id="P08165">
    <property type="interactions" value="2"/>
</dbReference>
<dbReference type="STRING" id="9913.ENSBTAP00000056258"/>
<dbReference type="PaxDb" id="9913-ENSBTAP00000056258"/>
<dbReference type="GeneID" id="282604"/>
<dbReference type="KEGG" id="bta:282604"/>
<dbReference type="CTD" id="2232"/>
<dbReference type="eggNOG" id="KOG1800">
    <property type="taxonomic scope" value="Eukaryota"/>
</dbReference>
<dbReference type="InParanoid" id="P08165"/>
<dbReference type="OrthoDB" id="333024at2759"/>
<dbReference type="BRENDA" id="1.18.1.6">
    <property type="organism ID" value="908"/>
</dbReference>
<dbReference type="SABIO-RK" id="P08165"/>
<dbReference type="UniPathway" id="UPA00296"/>
<dbReference type="EvolutionaryTrace" id="P08165"/>
<dbReference type="Proteomes" id="UP000009136">
    <property type="component" value="Unplaced"/>
</dbReference>
<dbReference type="GO" id="GO:0005743">
    <property type="term" value="C:mitochondrial inner membrane"/>
    <property type="evidence" value="ECO:0007669"/>
    <property type="project" value="UniProtKB-SubCell"/>
</dbReference>
<dbReference type="GO" id="GO:0005739">
    <property type="term" value="C:mitochondrion"/>
    <property type="evidence" value="ECO:0000250"/>
    <property type="project" value="UniProtKB"/>
</dbReference>
<dbReference type="GO" id="GO:0004324">
    <property type="term" value="F:ferredoxin-NADP+ reductase activity"/>
    <property type="evidence" value="ECO:0000314"/>
    <property type="project" value="UniProtKB"/>
</dbReference>
<dbReference type="GO" id="GO:0050660">
    <property type="term" value="F:flavin adenine dinucleotide binding"/>
    <property type="evidence" value="ECO:0000314"/>
    <property type="project" value="UniProtKB"/>
</dbReference>
<dbReference type="GO" id="GO:0050661">
    <property type="term" value="F:NADP binding"/>
    <property type="evidence" value="ECO:0000314"/>
    <property type="project" value="UniProtKB"/>
</dbReference>
<dbReference type="GO" id="GO:0008203">
    <property type="term" value="P:cholesterol metabolic process"/>
    <property type="evidence" value="ECO:0007669"/>
    <property type="project" value="UniProtKB-UniPathway"/>
</dbReference>
<dbReference type="GO" id="GO:0022900">
    <property type="term" value="P:electron transport chain"/>
    <property type="evidence" value="ECO:0000314"/>
    <property type="project" value="UniProtKB"/>
</dbReference>
<dbReference type="GO" id="GO:0006694">
    <property type="term" value="P:steroid biosynthetic process"/>
    <property type="evidence" value="ECO:0000318"/>
    <property type="project" value="GO_Central"/>
</dbReference>
<dbReference type="GO" id="GO:0006744">
    <property type="term" value="P:ubiquinone biosynthetic process"/>
    <property type="evidence" value="ECO:0000250"/>
    <property type="project" value="UniProtKB"/>
</dbReference>
<dbReference type="FunFam" id="3.50.50.60:FF:000036">
    <property type="entry name" value="NADPH:adrenodoxin oxidoreductase, mitochondrial"/>
    <property type="match status" value="1"/>
</dbReference>
<dbReference type="Gene3D" id="3.50.50.60">
    <property type="entry name" value="FAD/NAD(P)-binding domain"/>
    <property type="match status" value="1"/>
</dbReference>
<dbReference type="Gene3D" id="3.40.50.720">
    <property type="entry name" value="NAD(P)-binding Rossmann-like Domain"/>
    <property type="match status" value="1"/>
</dbReference>
<dbReference type="InterPro" id="IPR036188">
    <property type="entry name" value="FAD/NAD-bd_sf"/>
</dbReference>
<dbReference type="InterPro" id="IPR023753">
    <property type="entry name" value="FAD/NAD-binding_dom"/>
</dbReference>
<dbReference type="InterPro" id="IPR055275">
    <property type="entry name" value="Ferredox_Rdtase"/>
</dbReference>
<dbReference type="InterPro" id="IPR021163">
    <property type="entry name" value="Ferredox_Rdtase_adrenod"/>
</dbReference>
<dbReference type="PANTHER" id="PTHR48467">
    <property type="entry name" value="GLUTAMATE SYNTHASE 1 [NADH], CHLOROPLASTIC-LIKE"/>
    <property type="match status" value="1"/>
</dbReference>
<dbReference type="PANTHER" id="PTHR48467:SF1">
    <property type="entry name" value="GLUTAMATE SYNTHASE 1 [NADH], CHLOROPLASTIC-LIKE"/>
    <property type="match status" value="1"/>
</dbReference>
<dbReference type="Pfam" id="PF07992">
    <property type="entry name" value="Pyr_redox_2"/>
    <property type="match status" value="1"/>
</dbReference>
<dbReference type="PIRSF" id="PIRSF000362">
    <property type="entry name" value="FNR"/>
    <property type="match status" value="1"/>
</dbReference>
<dbReference type="PRINTS" id="PR00419">
    <property type="entry name" value="ADXRDTASE"/>
</dbReference>
<dbReference type="SUPFAM" id="SSF51905">
    <property type="entry name" value="FAD/NAD(P)-binding domain"/>
    <property type="match status" value="1"/>
</dbReference>
<dbReference type="SUPFAM" id="SSF51971">
    <property type="entry name" value="Nucleotide-binding domain"/>
    <property type="match status" value="2"/>
</dbReference>
<reference key="1">
    <citation type="journal article" date="1987" name="J. Biochem.">
        <title>Cloning and sequence analysis of adrenodoxin reductase cDNA from bovine adrenal cortex.</title>
        <authorList>
            <person name="Sagara Y."/>
            <person name="Takata Y."/>
            <person name="Miyata T."/>
            <person name="Hara T."/>
            <person name="Horiuchi T."/>
        </authorList>
    </citation>
    <scope>NUCLEOTIDE SEQUENCE [MRNA]</scope>
    <scope>PARTIAL PROTEIN SEQUENCE</scope>
</reference>
<reference key="2">
    <citation type="journal article" date="1987" name="Biochem. Biophys. Res. Commun.">
        <title>Molecular cloning and sequence analysis of full-length cDNA for mRNA of adrenodoxin oxidoreductase from bovine adrenal cortex.</title>
        <authorList>
            <person name="Nonaka Y."/>
            <person name="Murakami H."/>
            <person name="Yabusaki Y."/>
            <person name="Kuramitsu S."/>
            <person name="Kagamiyama H."/>
            <person name="Yamano T."/>
            <person name="Okamoto M."/>
        </authorList>
    </citation>
    <scope>NUCLEOTIDE SEQUENCE [MRNA]</scope>
</reference>
<reference key="3">
    <citation type="journal article" date="1989" name="Eur. J. Biochem.">
        <title>cDNA sequence of adrenodoxin reductase. Identification of NADP-binding sites in oxidoreductases.</title>
        <authorList>
            <person name="Hanukoglu I."/>
            <person name="Gutfinger T."/>
        </authorList>
    </citation>
    <scope>NUCLEOTIDE SEQUENCE [MRNA]</scope>
    <source>
        <tissue>Adrenal cortex</tissue>
    </source>
</reference>
<reference key="4">
    <citation type="journal article" date="1993" name="Biol. Pharm. Bull.">
        <title>Gene structure of bovine adrenodoxin reductase.</title>
        <authorList>
            <person name="Takata Y."/>
            <person name="Sagara Y."/>
            <person name="Kono A."/>
            <person name="Sekimizu K."/>
            <person name="Horiuchi T."/>
        </authorList>
    </citation>
    <scope>NUCLEOTIDE SEQUENCE [GENOMIC DNA]</scope>
    <scope>ALTERNATIVE SPLICING</scope>
</reference>
<reference key="5">
    <citation type="journal article" date="2005" name="BMC Genomics">
        <title>Characterization of 954 bovine full-CDS cDNA sequences.</title>
        <authorList>
            <person name="Harhay G.P."/>
            <person name="Sonstegard T.S."/>
            <person name="Keele J.W."/>
            <person name="Heaton M.P."/>
            <person name="Clawson M.L."/>
            <person name="Snelling W.M."/>
            <person name="Wiedmann R.T."/>
            <person name="Van Tassell C.P."/>
            <person name="Smith T.P.L."/>
        </authorList>
    </citation>
    <scope>NUCLEOTIDE SEQUENCE [LARGE SCALE MRNA]</scope>
</reference>
<reference key="6">
    <citation type="journal article" date="1988" name="Biochim. Biophys. Acta">
        <title>Adrenoferredoxin-binding peptide of NADPH-adrenoferredoxin reductase.</title>
        <authorList>
            <person name="Hamamoto I."/>
            <person name="Kurokohchi K."/>
            <person name="Tanaka S."/>
            <person name="Ichikawa Y."/>
        </authorList>
    </citation>
    <scope>PROTEIN SEQUENCE OF 33-62; 254-276 AND 487-492</scope>
</reference>
<reference key="7">
    <citation type="journal article" date="1995" name="Biochim. Biophys. Acta">
        <title>Structural and functional characterization of bovine adrenodoxin reductase by limited proteolysis.</title>
        <authorList>
            <person name="Warburton R.J."/>
            <person name="Seybert D.W."/>
        </authorList>
    </citation>
    <scope>PROTEIN SEQUENCE OF 33-51 AND 298-320</scope>
    <scope>FUNCTION</scope>
    <scope>CATALYTIC ACTIVITY</scope>
</reference>
<reference key="8">
    <citation type="journal article" date="1987" name="Eur. J. Biochem.">
        <title>Isolation of a cDNA for adrenodoxin reductase (ferredoxin-NADP+ reductase). Implications for mitochondrial cytochrome P-450 systems.</title>
        <authorList>
            <person name="Hanukoglu I."/>
            <person name="Gutfinger T."/>
            <person name="Haniu M."/>
            <person name="Shively J.E."/>
        </authorList>
    </citation>
    <scope>PROTEIN SEQUENCE OF N-TERMINUS</scope>
    <scope>PARTIAL PROTEIN SEQUENCE</scope>
    <source>
        <tissue>Adrenal cortex</tissue>
    </source>
</reference>
<reference key="9">
    <citation type="journal article" date="1986" name="Eur. J. Biochem.">
        <title>Stoichiometry of mitochondrial cytochromes P-450, adrenodoxin and adrenodoxin reductase in adrenal cortex and corpus luteum. Implications for membrane organization and gene regulation.</title>
        <authorList>
            <person name="Hanukoglu I."/>
            <person name="Hanukoglu Z."/>
        </authorList>
    </citation>
    <scope>TISSUE SPECIFICITY</scope>
</reference>
<reference key="10">
    <citation type="journal article" date="1999" name="J. Mol. Biol.">
        <title>The structure of adrenodoxin reductase of mitochondrial P450 systems: electron transfer for steroid biosynthesis.</title>
        <authorList>
            <person name="Ziegler G.A."/>
            <person name="Vonrhein C."/>
            <person name="Hanukoglu I."/>
            <person name="Schulz G.E."/>
        </authorList>
    </citation>
    <scope>X-RAY CRYSTALLOGRAPHY (1.7 ANGSTROMS) OF 33-492 IN COMPLEX WITH FAD</scope>
</reference>
<reference key="11">
    <citation type="journal article" date="2000" name="Biochemistry">
        <title>Crystal structures of adrenodoxin reductase in complex with NADP+ and NADPH suggesting a mechanism for the electron transfer of an enzyme family.</title>
        <authorList>
            <person name="Ziegler G.A."/>
            <person name="Schulz G.E."/>
        </authorList>
    </citation>
    <scope>X-RAY CRYSTALLOGRAPHY (1.85 ANGSTROMS) OF 33-492 IN COMPLEX WITH NADP</scope>
</reference>
<reference key="12">
    <citation type="journal article" date="2001" name="J. Biol. Chem.">
        <title>Adrenodoxin reductase-adrenodoxin complex structure suggests electron transfer path in steroid biosynthesis.</title>
        <authorList>
            <person name="Mueller J.J."/>
            <person name="Lapko A."/>
            <person name="Bourenkov G."/>
            <person name="Ruckpaul K."/>
            <person name="Heinemann U."/>
        </authorList>
    </citation>
    <scope>X-RAY CRYSTALLOGRAPHY (2.3 ANGSTROMS) OF 33-492 IN COMPLEX WITH FDX1</scope>
</reference>
<sequence length="492" mass="54338">MAPRCWRWWPWSSWTRTRLPPSRSIQNFGQHFSTQEQTPQICVVGSGPAGFYTAQHLLKHHSRAHVDIYEKQLVPFGLVRFGVAPDHPEVKNVINTFTQTARSDRCAFYGNVEVGRDVTVQELQDAYHAVVLSYGAEDHQALDIPGEELPGVFSARAFVGWYNGLPENRELAPDLSCDTAVILGQGNVALDVARILLTPPDHLEKTDITEAALGALRQSRVKTVWIVGRRGPLQVAFTIKELREMIQLPGTRPMLDPADFLGLQDRIKEAARPRKRLMELLLRTATEKPGVEEAARRASASRAWGLRFFRSPQQVLPSPDGRRAAGIRLAVTRLEGIGEATRAVPTGDVEDLPCGLVLSSIGYKSRPIDPSVPFDPKLGVVPNMEGRVVDVPGLYCSGWVKRGPTGVITTTMTDSFLTGQILLQDLKAGHLPSGPRPGSAFIKALLDSRGVWPVSFSDWEKLDAEEVSRGQASGKPREKLLDPQEMLRLLGH</sequence>
<evidence type="ECO:0000250" key="1">
    <source>
        <dbReference type="UniProtKB" id="P22570"/>
    </source>
</evidence>
<evidence type="ECO:0000250" key="2">
    <source>
        <dbReference type="UniProtKB" id="P48360"/>
    </source>
</evidence>
<evidence type="ECO:0000269" key="3">
    <source>
    </source>
</evidence>
<evidence type="ECO:0000269" key="4">
    <source>
    </source>
</evidence>
<evidence type="ECO:0000269" key="5">
    <source>
    </source>
</evidence>
<evidence type="ECO:0000269" key="6">
    <source>
    </source>
</evidence>
<evidence type="ECO:0000269" key="7">
    <source>
    </source>
</evidence>
<evidence type="ECO:0000269" key="8">
    <source>
    </source>
</evidence>
<evidence type="ECO:0000269" key="9">
    <source>
    </source>
</evidence>
<evidence type="ECO:0000305" key="10"/>
<evidence type="ECO:0007829" key="11">
    <source>
        <dbReference type="PDB" id="1CJC"/>
    </source>
</evidence>
<keyword id="KW-0002">3D-structure</keyword>
<keyword id="KW-0025">Alternative splicing</keyword>
<keyword id="KW-0153">Cholesterol metabolism</keyword>
<keyword id="KW-0903">Direct protein sequencing</keyword>
<keyword id="KW-0249">Electron transport</keyword>
<keyword id="KW-0274">FAD</keyword>
<keyword id="KW-0285">Flavoprotein</keyword>
<keyword id="KW-0443">Lipid metabolism</keyword>
<keyword id="KW-0472">Membrane</keyword>
<keyword id="KW-0496">Mitochondrion</keyword>
<keyword id="KW-0999">Mitochondrion inner membrane</keyword>
<keyword id="KW-0521">NADP</keyword>
<keyword id="KW-0560">Oxidoreductase</keyword>
<keyword id="KW-0597">Phosphoprotein</keyword>
<keyword id="KW-1185">Reference proteome</keyword>
<keyword id="KW-0753">Steroid metabolism</keyword>
<keyword id="KW-1207">Sterol metabolism</keyword>
<keyword id="KW-0809">Transit peptide</keyword>
<keyword id="KW-0813">Transport</keyword>
<feature type="transit peptide" description="Mitochondrion" evidence="7 8 9">
    <location>
        <begin position="1"/>
        <end position="32"/>
    </location>
</feature>
<feature type="chain" id="PRO_0000019419" description="NADPH:adrenodoxin oxidoreductase, mitochondrial">
    <location>
        <begin position="33"/>
        <end position="492"/>
    </location>
</feature>
<feature type="binding site" evidence="3">
    <location>
        <position position="49"/>
    </location>
    <ligand>
        <name>FAD</name>
        <dbReference type="ChEBI" id="CHEBI:57692"/>
    </ligand>
</feature>
<feature type="binding site" evidence="3">
    <location>
        <position position="70"/>
    </location>
    <ligand>
        <name>FAD</name>
        <dbReference type="ChEBI" id="CHEBI:57692"/>
    </ligand>
</feature>
<feature type="binding site" evidence="3">
    <location>
        <position position="78"/>
    </location>
    <ligand>
        <name>FAD</name>
        <dbReference type="ChEBI" id="CHEBI:57692"/>
    </ligand>
</feature>
<feature type="binding site" evidence="3">
    <location>
        <position position="114"/>
    </location>
    <ligand>
        <name>FAD</name>
        <dbReference type="ChEBI" id="CHEBI:57692"/>
    </ligand>
</feature>
<feature type="binding site" evidence="4">
    <location>
        <begin position="185"/>
        <end position="188"/>
    </location>
    <ligand>
        <name>NADP(+)</name>
        <dbReference type="ChEBI" id="CHEBI:58349"/>
    </ligand>
</feature>
<feature type="binding site" evidence="4">
    <location>
        <begin position="229"/>
        <end position="230"/>
    </location>
    <ligand>
        <name>NADP(+)</name>
        <dbReference type="ChEBI" id="CHEBI:58349"/>
    </ligand>
</feature>
<feature type="binding site" evidence="4">
    <location>
        <position position="241"/>
    </location>
    <ligand>
        <name>NADP(+)</name>
        <dbReference type="ChEBI" id="CHEBI:58349"/>
    </ligand>
</feature>
<feature type="binding site" evidence="3">
    <location>
        <position position="399"/>
    </location>
    <ligand>
        <name>FAD</name>
        <dbReference type="ChEBI" id="CHEBI:57692"/>
    </ligand>
</feature>
<feature type="binding site" evidence="3">
    <location>
        <begin position="406"/>
        <end position="408"/>
    </location>
    <ligand>
        <name>FAD</name>
        <dbReference type="ChEBI" id="CHEBI:57692"/>
    </ligand>
</feature>
<feature type="binding site" evidence="4">
    <location>
        <position position="406"/>
    </location>
    <ligand>
        <name>NADP(+)</name>
        <dbReference type="ChEBI" id="CHEBI:58349"/>
    </ligand>
</feature>
<feature type="modified residue" description="Phosphoserine" evidence="1">
    <location>
        <position position="311"/>
    </location>
</feature>
<feature type="modified residue" description="Phosphoserine" evidence="1">
    <location>
        <position position="318"/>
    </location>
</feature>
<feature type="splice variant" id="VSP_003415" description="In isoform Long." evidence="10">
    <original>E</original>
    <variation>EVLLLCQ</variation>
    <location>
        <position position="204"/>
    </location>
</feature>
<feature type="sequence conflict" description="In Ref. 6; AA sequence." evidence="10" ref="6">
    <original>C</original>
    <variation>S</variation>
    <location>
        <position position="42"/>
    </location>
</feature>
<feature type="sequence conflict" description="In Ref. 2; AAA30362." evidence="10" ref="2">
    <original>G</original>
    <variation>R</variation>
    <location>
        <position position="77"/>
    </location>
</feature>
<feature type="sequence conflict" description="In Ref. 2." evidence="10" ref="2">
    <original>FGVAPDHPEVKNVI</original>
    <variation>VWLALTTPRSRMLL</variation>
    <location>
        <begin position="81"/>
        <end position="94"/>
    </location>
</feature>
<feature type="sequence conflict" description="In Ref. 2; AAA30362." evidence="10" ref="2">
    <original>QDAYH</original>
    <variation>RVYRLT</variation>
    <location>
        <begin position="124"/>
        <end position="128"/>
    </location>
</feature>
<feature type="sequence conflict" description="In Ref. 2; AAA30362." evidence="10" ref="2">
    <original>K</original>
    <variation>R</variation>
    <location>
        <position position="268"/>
    </location>
</feature>
<feature type="sequence conflict" description="In Ref. 2; AAA30362." evidence="10" ref="2">
    <original>PS</original>
    <variation>RL</variation>
    <location>
        <begin position="317"/>
        <end position="318"/>
    </location>
</feature>
<feature type="sequence conflict" description="In Ref. 2; AAA30362." evidence="10" ref="2">
    <original>RAAGIRLAVTR</original>
    <variation>ARRSAWQSPE</variation>
    <location>
        <begin position="323"/>
        <end position="333"/>
    </location>
</feature>
<feature type="sequence conflict" description="In Ref. 2; AAA30362." evidence="10" ref="2">
    <original>TRAVPTGDVEDL</original>
    <variation>HPGSAHWGCGGP</variation>
    <location>
        <begin position="341"/>
        <end position="352"/>
    </location>
</feature>
<feature type="sequence conflict" description="In Ref. 6; AA sequence." evidence="10" ref="6">
    <original>RL</original>
    <variation>TM</variation>
    <location>
        <begin position="488"/>
        <end position="489"/>
    </location>
</feature>
<feature type="sequence conflict" description="In Ref. 5; AAX46664." evidence="10" ref="5">
    <original>G</original>
    <variation>R</variation>
    <location>
        <position position="491"/>
    </location>
</feature>
<feature type="strand" evidence="11">
    <location>
        <begin position="40"/>
        <end position="44"/>
    </location>
</feature>
<feature type="helix" evidence="11">
    <location>
        <begin position="48"/>
        <end position="60"/>
    </location>
</feature>
<feature type="strand" evidence="11">
    <location>
        <begin position="65"/>
        <end position="69"/>
    </location>
</feature>
<feature type="strand" evidence="11">
    <location>
        <begin position="71"/>
        <end position="75"/>
    </location>
</feature>
<feature type="helix" evidence="11">
    <location>
        <begin position="78"/>
        <end position="81"/>
    </location>
</feature>
<feature type="helix" evidence="11">
    <location>
        <begin position="88"/>
        <end position="92"/>
    </location>
</feature>
<feature type="helix" evidence="11">
    <location>
        <begin position="93"/>
        <end position="101"/>
    </location>
</feature>
<feature type="strand" evidence="11">
    <location>
        <begin position="106"/>
        <end position="111"/>
    </location>
</feature>
<feature type="turn" evidence="11">
    <location>
        <begin position="114"/>
        <end position="116"/>
    </location>
</feature>
<feature type="helix" evidence="11">
    <location>
        <begin position="120"/>
        <end position="126"/>
    </location>
</feature>
<feature type="strand" evidence="11">
    <location>
        <begin position="127"/>
        <end position="132"/>
    </location>
</feature>
<feature type="turn" evidence="11">
    <location>
        <begin position="145"/>
        <end position="148"/>
    </location>
</feature>
<feature type="strand" evidence="11">
    <location>
        <begin position="152"/>
        <end position="154"/>
    </location>
</feature>
<feature type="helix" evidence="11">
    <location>
        <begin position="155"/>
        <end position="162"/>
    </location>
</feature>
<feature type="helix" evidence="11">
    <location>
        <begin position="166"/>
        <end position="168"/>
    </location>
</feature>
<feature type="strand" evidence="11">
    <location>
        <begin position="177"/>
        <end position="184"/>
    </location>
</feature>
<feature type="helix" evidence="11">
    <location>
        <begin position="187"/>
        <end position="197"/>
    </location>
</feature>
<feature type="helix" evidence="11">
    <location>
        <begin position="200"/>
        <end position="203"/>
    </location>
</feature>
<feature type="helix" evidence="11">
    <location>
        <begin position="210"/>
        <end position="217"/>
    </location>
</feature>
<feature type="strand" evidence="11">
    <location>
        <begin position="223"/>
        <end position="227"/>
    </location>
</feature>
<feature type="helix" evidence="11">
    <location>
        <begin position="232"/>
        <end position="234"/>
    </location>
</feature>
<feature type="helix" evidence="11">
    <location>
        <begin position="239"/>
        <end position="246"/>
    </location>
</feature>
<feature type="strand" evidence="11">
    <location>
        <begin position="251"/>
        <end position="254"/>
    </location>
</feature>
<feature type="helix" evidence="11">
    <location>
        <begin position="257"/>
        <end position="260"/>
    </location>
</feature>
<feature type="helix" evidence="11">
    <location>
        <begin position="263"/>
        <end position="266"/>
    </location>
</feature>
<feature type="turn" evidence="11">
    <location>
        <begin position="267"/>
        <end position="269"/>
    </location>
</feature>
<feature type="helix" evidence="11">
    <location>
        <begin position="272"/>
        <end position="286"/>
    </location>
</feature>
<feature type="helix" evidence="11">
    <location>
        <begin position="291"/>
        <end position="298"/>
    </location>
</feature>
<feature type="strand" evidence="11">
    <location>
        <begin position="301"/>
        <end position="307"/>
    </location>
</feature>
<feature type="strand" evidence="11">
    <location>
        <begin position="309"/>
        <end position="317"/>
    </location>
</feature>
<feature type="strand" evidence="11">
    <location>
        <begin position="321"/>
        <end position="337"/>
    </location>
</feature>
<feature type="helix" evidence="11">
    <location>
        <begin position="338"/>
        <end position="340"/>
    </location>
</feature>
<feature type="strand" evidence="11">
    <location>
        <begin position="342"/>
        <end position="353"/>
    </location>
</feature>
<feature type="strand" evidence="11">
    <location>
        <begin position="355"/>
        <end position="359"/>
    </location>
</feature>
<feature type="turn" evidence="11">
    <location>
        <begin position="376"/>
        <end position="379"/>
    </location>
</feature>
<feature type="strand" evidence="11">
    <location>
        <begin position="394"/>
        <end position="396"/>
    </location>
</feature>
<feature type="helix" evidence="11">
    <location>
        <begin position="399"/>
        <end position="402"/>
    </location>
</feature>
<feature type="helix" evidence="11">
    <location>
        <begin position="408"/>
        <end position="428"/>
    </location>
</feature>
<feature type="helix" evidence="11">
    <location>
        <begin position="439"/>
        <end position="449"/>
    </location>
</feature>
<feature type="helix" evidence="11">
    <location>
        <begin position="456"/>
        <end position="473"/>
    </location>
</feature>
<feature type="helix" evidence="11">
    <location>
        <begin position="483"/>
        <end position="489"/>
    </location>
</feature>